<feature type="chain" id="PRO_0000161155" description="Elongation factor Ts">
    <location>
        <begin position="1"/>
        <end position="295"/>
    </location>
</feature>
<feature type="region of interest" description="Involved in Mg(2+) ion dislocation from EF-Tu" evidence="1">
    <location>
        <begin position="79"/>
        <end position="82"/>
    </location>
</feature>
<reference key="1">
    <citation type="journal article" date="2004" name="Genome Res.">
        <title>The genome sequence of Mycoplasma mycoides subsp. mycoides SC type strain PG1T, the causative agent of contagious bovine pleuropneumonia (CBPP).</title>
        <authorList>
            <person name="Westberg J."/>
            <person name="Persson A."/>
            <person name="Holmberg A."/>
            <person name="Goesmann A."/>
            <person name="Lundeberg J."/>
            <person name="Johansson K.-E."/>
            <person name="Pettersson B."/>
            <person name="Uhlen M."/>
        </authorList>
    </citation>
    <scope>NUCLEOTIDE SEQUENCE [LARGE SCALE GENOMIC DNA]</scope>
    <source>
        <strain>CCUG 32753 / NCTC 10114 / PG1</strain>
    </source>
</reference>
<keyword id="KW-0963">Cytoplasm</keyword>
<keyword id="KW-0251">Elongation factor</keyword>
<keyword id="KW-0648">Protein biosynthesis</keyword>
<keyword id="KW-1185">Reference proteome</keyword>
<name>EFTS_MYCMS</name>
<evidence type="ECO:0000255" key="1">
    <source>
        <dbReference type="HAMAP-Rule" id="MF_00050"/>
    </source>
</evidence>
<dbReference type="EMBL" id="BX293980">
    <property type="protein sequence ID" value="CAE77229.1"/>
    <property type="molecule type" value="Genomic_DNA"/>
</dbReference>
<dbReference type="RefSeq" id="NP_975587.1">
    <property type="nucleotide sequence ID" value="NC_005364.2"/>
</dbReference>
<dbReference type="RefSeq" id="WP_011166783.1">
    <property type="nucleotide sequence ID" value="NC_005364.2"/>
</dbReference>
<dbReference type="SMR" id="P61335"/>
<dbReference type="STRING" id="272632.MSC_0607"/>
<dbReference type="KEGG" id="mmy:MSC_0607"/>
<dbReference type="PATRIC" id="fig|272632.4.peg.653"/>
<dbReference type="eggNOG" id="COG0264">
    <property type="taxonomic scope" value="Bacteria"/>
</dbReference>
<dbReference type="HOGENOM" id="CLU_047155_0_2_14"/>
<dbReference type="Proteomes" id="UP000001016">
    <property type="component" value="Chromosome"/>
</dbReference>
<dbReference type="GO" id="GO:0005737">
    <property type="term" value="C:cytoplasm"/>
    <property type="evidence" value="ECO:0007669"/>
    <property type="project" value="UniProtKB-SubCell"/>
</dbReference>
<dbReference type="GO" id="GO:0003746">
    <property type="term" value="F:translation elongation factor activity"/>
    <property type="evidence" value="ECO:0007669"/>
    <property type="project" value="UniProtKB-UniRule"/>
</dbReference>
<dbReference type="CDD" id="cd14275">
    <property type="entry name" value="UBA_EF-Ts"/>
    <property type="match status" value="1"/>
</dbReference>
<dbReference type="FunFam" id="1.10.8.10:FF:000001">
    <property type="entry name" value="Elongation factor Ts"/>
    <property type="match status" value="1"/>
</dbReference>
<dbReference type="Gene3D" id="1.10.286.20">
    <property type="match status" value="1"/>
</dbReference>
<dbReference type="Gene3D" id="1.10.8.10">
    <property type="entry name" value="DNA helicase RuvA subunit, C-terminal domain"/>
    <property type="match status" value="1"/>
</dbReference>
<dbReference type="Gene3D" id="3.30.479.20">
    <property type="entry name" value="Elongation factor Ts, dimerisation domain"/>
    <property type="match status" value="2"/>
</dbReference>
<dbReference type="HAMAP" id="MF_00050">
    <property type="entry name" value="EF_Ts"/>
    <property type="match status" value="1"/>
</dbReference>
<dbReference type="InterPro" id="IPR036402">
    <property type="entry name" value="EF-Ts_dimer_sf"/>
</dbReference>
<dbReference type="InterPro" id="IPR001816">
    <property type="entry name" value="Transl_elong_EFTs/EF1B"/>
</dbReference>
<dbReference type="InterPro" id="IPR014039">
    <property type="entry name" value="Transl_elong_EFTs/EF1B_dimer"/>
</dbReference>
<dbReference type="InterPro" id="IPR018101">
    <property type="entry name" value="Transl_elong_Ts_CS"/>
</dbReference>
<dbReference type="InterPro" id="IPR009060">
    <property type="entry name" value="UBA-like_sf"/>
</dbReference>
<dbReference type="NCBIfam" id="TIGR00116">
    <property type="entry name" value="tsf"/>
    <property type="match status" value="1"/>
</dbReference>
<dbReference type="PANTHER" id="PTHR11741">
    <property type="entry name" value="ELONGATION FACTOR TS"/>
    <property type="match status" value="1"/>
</dbReference>
<dbReference type="PANTHER" id="PTHR11741:SF0">
    <property type="entry name" value="ELONGATION FACTOR TS, MITOCHONDRIAL"/>
    <property type="match status" value="1"/>
</dbReference>
<dbReference type="Pfam" id="PF00889">
    <property type="entry name" value="EF_TS"/>
    <property type="match status" value="1"/>
</dbReference>
<dbReference type="SUPFAM" id="SSF54713">
    <property type="entry name" value="Elongation factor Ts (EF-Ts), dimerisation domain"/>
    <property type="match status" value="1"/>
</dbReference>
<dbReference type="SUPFAM" id="SSF46934">
    <property type="entry name" value="UBA-like"/>
    <property type="match status" value="1"/>
</dbReference>
<dbReference type="PROSITE" id="PS01126">
    <property type="entry name" value="EF_TS_1"/>
    <property type="match status" value="1"/>
</dbReference>
<dbReference type="PROSITE" id="PS01127">
    <property type="entry name" value="EF_TS_2"/>
    <property type="match status" value="1"/>
</dbReference>
<accession>P61335</accession>
<proteinExistence type="inferred from homology"/>
<gene>
    <name evidence="1" type="primary">tsf</name>
    <name type="ordered locus">MSC_0607</name>
</gene>
<protein>
    <recommendedName>
        <fullName evidence="1">Elongation factor Ts</fullName>
        <shortName evidence="1">EF-Ts</shortName>
    </recommendedName>
</protein>
<sequence>MAVDAKLIKELREITQAGMMDCKKALEASDNNIDNAIVWLRENGLAKAAKKTDRVAAEGIVLAKENDQKIVILEVNSETDFVAKNEKFLSLVDEIANALLNSNASSLEEGLQVKTDSGLTIEQSLISATATIGEKIALRRFELVNKTSGSSVIYNHANKRVSTLLVFDNKLDPTDAYNVAMHVAAMAPKYINMDQIPEDFKNAEMHIIKEQAKDDAKLQAKPANVLENILKGKLSKRLAEVSLLDQLFVIDESFKVGDFLKSKHVSLVKMIRYEVGEGIEKVVTNFADEVAAQLK</sequence>
<organism>
    <name type="scientific">Mycoplasma mycoides subsp. mycoides SC (strain CCUG 32753 / NCTC 10114 / PG1)</name>
    <dbReference type="NCBI Taxonomy" id="272632"/>
    <lineage>
        <taxon>Bacteria</taxon>
        <taxon>Bacillati</taxon>
        <taxon>Mycoplasmatota</taxon>
        <taxon>Mollicutes</taxon>
        <taxon>Mycoplasmataceae</taxon>
        <taxon>Mycoplasma</taxon>
    </lineage>
</organism>
<comment type="function">
    <text evidence="1">Associates with the EF-Tu.GDP complex and induces the exchange of GDP to GTP. It remains bound to the aminoacyl-tRNA.EF-Tu.GTP complex up to the GTP hydrolysis stage on the ribosome.</text>
</comment>
<comment type="subcellular location">
    <subcellularLocation>
        <location evidence="1">Cytoplasm</location>
    </subcellularLocation>
</comment>
<comment type="similarity">
    <text evidence="1">Belongs to the EF-Ts family.</text>
</comment>